<evidence type="ECO:0000255" key="1">
    <source>
        <dbReference type="HAMAP-Rule" id="MF_01274"/>
    </source>
</evidence>
<dbReference type="EC" id="2.7.1.33" evidence="1"/>
<dbReference type="EMBL" id="CP001154">
    <property type="protein sequence ID" value="ACO76230.1"/>
    <property type="molecule type" value="Genomic_DNA"/>
</dbReference>
<dbReference type="RefSeq" id="WP_012698693.1">
    <property type="nucleotide sequence ID" value="NC_012559.1"/>
</dbReference>
<dbReference type="SMR" id="C1D6Y0"/>
<dbReference type="STRING" id="557598.LHK_03253"/>
<dbReference type="KEGG" id="lhk:LHK_03253"/>
<dbReference type="eggNOG" id="COG1521">
    <property type="taxonomic scope" value="Bacteria"/>
</dbReference>
<dbReference type="HOGENOM" id="CLU_066627_0_0_4"/>
<dbReference type="UniPathway" id="UPA00241">
    <property type="reaction ID" value="UER00352"/>
</dbReference>
<dbReference type="Proteomes" id="UP000002010">
    <property type="component" value="Chromosome"/>
</dbReference>
<dbReference type="GO" id="GO:0005737">
    <property type="term" value="C:cytoplasm"/>
    <property type="evidence" value="ECO:0007669"/>
    <property type="project" value="UniProtKB-SubCell"/>
</dbReference>
<dbReference type="GO" id="GO:0005524">
    <property type="term" value="F:ATP binding"/>
    <property type="evidence" value="ECO:0007669"/>
    <property type="project" value="UniProtKB-UniRule"/>
</dbReference>
<dbReference type="GO" id="GO:0004594">
    <property type="term" value="F:pantothenate kinase activity"/>
    <property type="evidence" value="ECO:0007669"/>
    <property type="project" value="UniProtKB-UniRule"/>
</dbReference>
<dbReference type="GO" id="GO:0015937">
    <property type="term" value="P:coenzyme A biosynthetic process"/>
    <property type="evidence" value="ECO:0007669"/>
    <property type="project" value="UniProtKB-UniRule"/>
</dbReference>
<dbReference type="CDD" id="cd24015">
    <property type="entry name" value="ASKHA_NBD_PanK-III"/>
    <property type="match status" value="1"/>
</dbReference>
<dbReference type="Gene3D" id="3.30.420.40">
    <property type="match status" value="2"/>
</dbReference>
<dbReference type="HAMAP" id="MF_01274">
    <property type="entry name" value="Pantothen_kinase_3"/>
    <property type="match status" value="1"/>
</dbReference>
<dbReference type="InterPro" id="IPR043129">
    <property type="entry name" value="ATPase_NBD"/>
</dbReference>
<dbReference type="InterPro" id="IPR004619">
    <property type="entry name" value="Type_III_PanK"/>
</dbReference>
<dbReference type="NCBIfam" id="TIGR00671">
    <property type="entry name" value="baf"/>
    <property type="match status" value="1"/>
</dbReference>
<dbReference type="PANTHER" id="PTHR34265">
    <property type="entry name" value="TYPE III PANTOTHENATE KINASE"/>
    <property type="match status" value="1"/>
</dbReference>
<dbReference type="PANTHER" id="PTHR34265:SF1">
    <property type="entry name" value="TYPE III PANTOTHENATE KINASE"/>
    <property type="match status" value="1"/>
</dbReference>
<dbReference type="Pfam" id="PF03309">
    <property type="entry name" value="Pan_kinase"/>
    <property type="match status" value="1"/>
</dbReference>
<dbReference type="SUPFAM" id="SSF53067">
    <property type="entry name" value="Actin-like ATPase domain"/>
    <property type="match status" value="2"/>
</dbReference>
<protein>
    <recommendedName>
        <fullName evidence="1">Type III pantothenate kinase</fullName>
        <ecNumber evidence="1">2.7.1.33</ecNumber>
    </recommendedName>
    <alternativeName>
        <fullName evidence="1">PanK-III</fullName>
    </alternativeName>
    <alternativeName>
        <fullName evidence="1">Pantothenic acid kinase</fullName>
    </alternativeName>
</protein>
<reference key="1">
    <citation type="journal article" date="2009" name="PLoS Genet.">
        <title>The complete genome and proteome of Laribacter hongkongensis reveal potential mechanisms for adaptations to different temperatures and habitats.</title>
        <authorList>
            <person name="Woo P.C.Y."/>
            <person name="Lau S.K.P."/>
            <person name="Tse H."/>
            <person name="Teng J.L.L."/>
            <person name="Curreem S.O."/>
            <person name="Tsang A.K.L."/>
            <person name="Fan R.Y.Y."/>
            <person name="Wong G.K.M."/>
            <person name="Huang Y."/>
            <person name="Loman N.J."/>
            <person name="Snyder L.A.S."/>
            <person name="Cai J.J."/>
            <person name="Huang J.-D."/>
            <person name="Mak W."/>
            <person name="Pallen M.J."/>
            <person name="Lok S."/>
            <person name="Yuen K.-Y."/>
        </authorList>
    </citation>
    <scope>NUCLEOTIDE SEQUENCE [LARGE SCALE GENOMIC DNA]</scope>
    <source>
        <strain>HLHK9</strain>
    </source>
</reference>
<sequence>MILLLDAGNTRLKWAWLAEGPARHTVHASPHHDLTALEQACRITPPRRVLGASVTSSERNSAIMAAVGRPVEWLVPAASCAGVTNAYRDPDRLGADRWAQMIGAHHEQPGDQVLVSAGTALTIDCLDREGRFWGGTIAPGLGLLRHSLAEGTARLGLPDGSWQEYPDNSADAIFSGCLNALTAPIEAQVARFGSQLGRPVRLTLAGGDAPLLAQHLAIDGTIVDNLVLSGLAHLARMSC</sequence>
<gene>
    <name evidence="1" type="primary">coaX</name>
    <name type="ordered locus">LHK_03253</name>
</gene>
<organism>
    <name type="scientific">Laribacter hongkongensis (strain HLHK9)</name>
    <dbReference type="NCBI Taxonomy" id="557598"/>
    <lineage>
        <taxon>Bacteria</taxon>
        <taxon>Pseudomonadati</taxon>
        <taxon>Pseudomonadota</taxon>
        <taxon>Betaproteobacteria</taxon>
        <taxon>Neisseriales</taxon>
        <taxon>Aquaspirillaceae</taxon>
        <taxon>Laribacter</taxon>
    </lineage>
</organism>
<accession>C1D6Y0</accession>
<comment type="function">
    <text evidence="1">Catalyzes the phosphorylation of pantothenate (Pan), the first step in CoA biosynthesis.</text>
</comment>
<comment type="catalytic activity">
    <reaction evidence="1">
        <text>(R)-pantothenate + ATP = (R)-4'-phosphopantothenate + ADP + H(+)</text>
        <dbReference type="Rhea" id="RHEA:16373"/>
        <dbReference type="ChEBI" id="CHEBI:10986"/>
        <dbReference type="ChEBI" id="CHEBI:15378"/>
        <dbReference type="ChEBI" id="CHEBI:29032"/>
        <dbReference type="ChEBI" id="CHEBI:30616"/>
        <dbReference type="ChEBI" id="CHEBI:456216"/>
        <dbReference type="EC" id="2.7.1.33"/>
    </reaction>
</comment>
<comment type="cofactor">
    <cofactor evidence="1">
        <name>NH4(+)</name>
        <dbReference type="ChEBI" id="CHEBI:28938"/>
    </cofactor>
    <cofactor evidence="1">
        <name>K(+)</name>
        <dbReference type="ChEBI" id="CHEBI:29103"/>
    </cofactor>
    <text evidence="1">A monovalent cation. Ammonium or potassium.</text>
</comment>
<comment type="pathway">
    <text evidence="1">Cofactor biosynthesis; coenzyme A biosynthesis; CoA from (R)-pantothenate: step 1/5.</text>
</comment>
<comment type="subunit">
    <text evidence="1">Homodimer.</text>
</comment>
<comment type="subcellular location">
    <subcellularLocation>
        <location evidence="1">Cytoplasm</location>
    </subcellularLocation>
</comment>
<comment type="similarity">
    <text evidence="1">Belongs to the type III pantothenate kinase family.</text>
</comment>
<name>COAX_LARHH</name>
<feature type="chain" id="PRO_1000165199" description="Type III pantothenate kinase">
    <location>
        <begin position="1"/>
        <end position="239"/>
    </location>
</feature>
<feature type="active site" description="Proton acceptor" evidence="1">
    <location>
        <position position="96"/>
    </location>
</feature>
<feature type="binding site" evidence="1">
    <location>
        <begin position="6"/>
        <end position="13"/>
    </location>
    <ligand>
        <name>ATP</name>
        <dbReference type="ChEBI" id="CHEBI:30616"/>
    </ligand>
</feature>
<feature type="binding site" evidence="1">
    <location>
        <position position="87"/>
    </location>
    <ligand>
        <name>substrate</name>
    </ligand>
</feature>
<feature type="binding site" evidence="1">
    <location>
        <begin position="94"/>
        <end position="97"/>
    </location>
    <ligand>
        <name>substrate</name>
    </ligand>
</feature>
<feature type="binding site" evidence="1">
    <location>
        <position position="119"/>
    </location>
    <ligand>
        <name>ATP</name>
        <dbReference type="ChEBI" id="CHEBI:30616"/>
    </ligand>
</feature>
<feature type="binding site" evidence="1">
    <location>
        <position position="169"/>
    </location>
    <ligand>
        <name>substrate</name>
    </ligand>
</feature>
<proteinExistence type="inferred from homology"/>
<keyword id="KW-0067">ATP-binding</keyword>
<keyword id="KW-0173">Coenzyme A biosynthesis</keyword>
<keyword id="KW-0963">Cytoplasm</keyword>
<keyword id="KW-0418">Kinase</keyword>
<keyword id="KW-0547">Nucleotide-binding</keyword>
<keyword id="KW-0630">Potassium</keyword>
<keyword id="KW-1185">Reference proteome</keyword>
<keyword id="KW-0808">Transferase</keyword>